<accession>Q633S1</accession>
<proteinExistence type="inferred from homology"/>
<reference key="1">
    <citation type="journal article" date="2006" name="J. Bacteriol.">
        <title>Pathogenomic sequence analysis of Bacillus cereus and Bacillus thuringiensis isolates closely related to Bacillus anthracis.</title>
        <authorList>
            <person name="Han C.S."/>
            <person name="Xie G."/>
            <person name="Challacombe J.F."/>
            <person name="Altherr M.R."/>
            <person name="Bhotika S.S."/>
            <person name="Bruce D."/>
            <person name="Campbell C.S."/>
            <person name="Campbell M.L."/>
            <person name="Chen J."/>
            <person name="Chertkov O."/>
            <person name="Cleland C."/>
            <person name="Dimitrijevic M."/>
            <person name="Doggett N.A."/>
            <person name="Fawcett J.J."/>
            <person name="Glavina T."/>
            <person name="Goodwin L.A."/>
            <person name="Hill K.K."/>
            <person name="Hitchcock P."/>
            <person name="Jackson P.J."/>
            <person name="Keim P."/>
            <person name="Kewalramani A.R."/>
            <person name="Longmire J."/>
            <person name="Lucas S."/>
            <person name="Malfatti S."/>
            <person name="McMurry K."/>
            <person name="Meincke L.J."/>
            <person name="Misra M."/>
            <person name="Moseman B.L."/>
            <person name="Mundt M."/>
            <person name="Munk A.C."/>
            <person name="Okinaka R.T."/>
            <person name="Parson-Quintana B."/>
            <person name="Reilly L.P."/>
            <person name="Richardson P."/>
            <person name="Robinson D.L."/>
            <person name="Rubin E."/>
            <person name="Saunders E."/>
            <person name="Tapia R."/>
            <person name="Tesmer J.G."/>
            <person name="Thayer N."/>
            <person name="Thompson L.S."/>
            <person name="Tice H."/>
            <person name="Ticknor L.O."/>
            <person name="Wills P.L."/>
            <person name="Brettin T.S."/>
            <person name="Gilna P."/>
        </authorList>
    </citation>
    <scope>NUCLEOTIDE SEQUENCE [LARGE SCALE GENOMIC DNA]</scope>
    <source>
        <strain>ZK / E33L</strain>
    </source>
</reference>
<keyword id="KW-0963">Cytoplasm</keyword>
<keyword id="KW-0227">DNA damage</keyword>
<keyword id="KW-0228">DNA excision</keyword>
<keyword id="KW-0234">DNA repair</keyword>
<keyword id="KW-0267">Excision nuclease</keyword>
<keyword id="KW-0742">SOS response</keyword>
<sequence>MHEHLKEKLAILPDQPGCYLMKDKQGTVIYVGKAKVLKNRVRSYFTGSHDGKTLRLVGEIVDFEYIVTSSNLEALILELNLIKKHDPKYNIQLKDDKTYPFIKITAEKQPRLLITRNVKKDKGKYFGPYPNAQSAHETKKLLDRMYPLRKCSNMPDKVCLYYHMGQCLAPCVKEVTEEQNKEIVDEIIKFLNGGHKEVRSELETKMYEASEKLEFERAKELRDQIAHIDAIMEKQKMIMSDLVDRDVFGYAVDKGWMCVQVFFVRKGKLIERDVSMFPIYDEPEEGFLTFIGQFYENSSHFKPKEIVVPGSIDSELVERFLEVEATQPKRGKKKDLVELANKNAKIALEEKFYLIERDEERTIKAVENLGKQLGIETPYRIEAFDNSNIQGTNPVSAMIAFIDGKPAKKEYRKYKIKTVQGPDDYESMREVVRRRYTRALKEGLPLPDLIIIDGGKGHLAAASDVLENELGLYIPMAGLVKDDKHKTSHLIIGDPPEPVMLERNSQEFYLLQRVQDEVHRFAITFHRQLHGKSVIQSALDDIPGIGDKRKKVLLKHFGSLKKMKEASIEEFVEAGMPKNVAETIYTYLTDKKTL</sequence>
<name>UVRC_BACCZ</name>
<evidence type="ECO:0000255" key="1">
    <source>
        <dbReference type="HAMAP-Rule" id="MF_00203"/>
    </source>
</evidence>
<comment type="function">
    <text evidence="1">The UvrABC repair system catalyzes the recognition and processing of DNA lesions. UvrC both incises the 5' and 3' sides of the lesion. The N-terminal half is responsible for the 3' incision and the C-terminal half is responsible for the 5' incision.</text>
</comment>
<comment type="subunit">
    <text evidence="1">Interacts with UvrB in an incision complex.</text>
</comment>
<comment type="subcellular location">
    <subcellularLocation>
        <location evidence="1">Cytoplasm</location>
    </subcellularLocation>
</comment>
<comment type="similarity">
    <text evidence="1">Belongs to the UvrC family.</text>
</comment>
<dbReference type="EMBL" id="CP000001">
    <property type="protein sequence ID" value="AAU16004.1"/>
    <property type="molecule type" value="Genomic_DNA"/>
</dbReference>
<dbReference type="RefSeq" id="WP_000544275.1">
    <property type="nucleotide sequence ID" value="NZ_CP009968.1"/>
</dbReference>
<dbReference type="SMR" id="Q633S1"/>
<dbReference type="KEGG" id="bcz:BCE33L4267"/>
<dbReference type="PATRIC" id="fig|288681.22.peg.1112"/>
<dbReference type="Proteomes" id="UP000002612">
    <property type="component" value="Chromosome"/>
</dbReference>
<dbReference type="GO" id="GO:0005737">
    <property type="term" value="C:cytoplasm"/>
    <property type="evidence" value="ECO:0007669"/>
    <property type="project" value="UniProtKB-SubCell"/>
</dbReference>
<dbReference type="GO" id="GO:0009380">
    <property type="term" value="C:excinuclease repair complex"/>
    <property type="evidence" value="ECO:0007669"/>
    <property type="project" value="InterPro"/>
</dbReference>
<dbReference type="GO" id="GO:0003677">
    <property type="term" value="F:DNA binding"/>
    <property type="evidence" value="ECO:0007669"/>
    <property type="project" value="UniProtKB-UniRule"/>
</dbReference>
<dbReference type="GO" id="GO:0009381">
    <property type="term" value="F:excinuclease ABC activity"/>
    <property type="evidence" value="ECO:0007669"/>
    <property type="project" value="UniProtKB-UniRule"/>
</dbReference>
<dbReference type="GO" id="GO:0006289">
    <property type="term" value="P:nucleotide-excision repair"/>
    <property type="evidence" value="ECO:0007669"/>
    <property type="project" value="UniProtKB-UniRule"/>
</dbReference>
<dbReference type="GO" id="GO:0009432">
    <property type="term" value="P:SOS response"/>
    <property type="evidence" value="ECO:0007669"/>
    <property type="project" value="UniProtKB-UniRule"/>
</dbReference>
<dbReference type="CDD" id="cd10434">
    <property type="entry name" value="GIY-YIG_UvrC_Cho"/>
    <property type="match status" value="1"/>
</dbReference>
<dbReference type="FunFam" id="1.10.150.20:FF:000005">
    <property type="entry name" value="UvrABC system protein C"/>
    <property type="match status" value="1"/>
</dbReference>
<dbReference type="FunFam" id="3.30.420.340:FF:000002">
    <property type="entry name" value="UvrABC system protein C"/>
    <property type="match status" value="1"/>
</dbReference>
<dbReference type="FunFam" id="3.40.1440.10:FF:000001">
    <property type="entry name" value="UvrABC system protein C"/>
    <property type="match status" value="1"/>
</dbReference>
<dbReference type="FunFam" id="4.10.860.10:FF:000002">
    <property type="entry name" value="UvrABC system protein C"/>
    <property type="match status" value="1"/>
</dbReference>
<dbReference type="Gene3D" id="1.10.150.20">
    <property type="entry name" value="5' to 3' exonuclease, C-terminal subdomain"/>
    <property type="match status" value="1"/>
</dbReference>
<dbReference type="Gene3D" id="3.40.1440.10">
    <property type="entry name" value="GIY-YIG endonuclease"/>
    <property type="match status" value="1"/>
</dbReference>
<dbReference type="Gene3D" id="4.10.860.10">
    <property type="entry name" value="UVR domain"/>
    <property type="match status" value="1"/>
</dbReference>
<dbReference type="Gene3D" id="3.30.420.340">
    <property type="entry name" value="UvrC, RNAse H endonuclease domain"/>
    <property type="match status" value="1"/>
</dbReference>
<dbReference type="HAMAP" id="MF_00203">
    <property type="entry name" value="UvrC"/>
    <property type="match status" value="1"/>
</dbReference>
<dbReference type="InterPro" id="IPR000305">
    <property type="entry name" value="GIY-YIG_endonuc"/>
</dbReference>
<dbReference type="InterPro" id="IPR035901">
    <property type="entry name" value="GIY-YIG_endonuc_sf"/>
</dbReference>
<dbReference type="InterPro" id="IPR047296">
    <property type="entry name" value="GIY-YIG_UvrC_Cho"/>
</dbReference>
<dbReference type="InterPro" id="IPR010994">
    <property type="entry name" value="RuvA_2-like"/>
</dbReference>
<dbReference type="InterPro" id="IPR001943">
    <property type="entry name" value="UVR_dom"/>
</dbReference>
<dbReference type="InterPro" id="IPR036876">
    <property type="entry name" value="UVR_dom_sf"/>
</dbReference>
<dbReference type="InterPro" id="IPR050066">
    <property type="entry name" value="UvrABC_protein_C"/>
</dbReference>
<dbReference type="InterPro" id="IPR004791">
    <property type="entry name" value="UvrC"/>
</dbReference>
<dbReference type="InterPro" id="IPR001162">
    <property type="entry name" value="UvrC_RNase_H_dom"/>
</dbReference>
<dbReference type="InterPro" id="IPR038476">
    <property type="entry name" value="UvrC_RNase_H_dom_sf"/>
</dbReference>
<dbReference type="NCBIfam" id="NF001824">
    <property type="entry name" value="PRK00558.1-5"/>
    <property type="match status" value="1"/>
</dbReference>
<dbReference type="NCBIfam" id="TIGR00194">
    <property type="entry name" value="uvrC"/>
    <property type="match status" value="1"/>
</dbReference>
<dbReference type="PANTHER" id="PTHR30562:SF1">
    <property type="entry name" value="UVRABC SYSTEM PROTEIN C"/>
    <property type="match status" value="1"/>
</dbReference>
<dbReference type="PANTHER" id="PTHR30562">
    <property type="entry name" value="UVRC/OXIDOREDUCTASE"/>
    <property type="match status" value="1"/>
</dbReference>
<dbReference type="Pfam" id="PF01541">
    <property type="entry name" value="GIY-YIG"/>
    <property type="match status" value="1"/>
</dbReference>
<dbReference type="Pfam" id="PF02151">
    <property type="entry name" value="UVR"/>
    <property type="match status" value="1"/>
</dbReference>
<dbReference type="Pfam" id="PF22920">
    <property type="entry name" value="UvrC_RNaseH"/>
    <property type="match status" value="1"/>
</dbReference>
<dbReference type="Pfam" id="PF08459">
    <property type="entry name" value="UvrC_RNaseH_dom"/>
    <property type="match status" value="1"/>
</dbReference>
<dbReference type="SMART" id="SM00465">
    <property type="entry name" value="GIYc"/>
    <property type="match status" value="1"/>
</dbReference>
<dbReference type="SUPFAM" id="SSF46600">
    <property type="entry name" value="C-terminal UvrC-binding domain of UvrB"/>
    <property type="match status" value="1"/>
</dbReference>
<dbReference type="SUPFAM" id="SSF82771">
    <property type="entry name" value="GIY-YIG endonuclease"/>
    <property type="match status" value="1"/>
</dbReference>
<dbReference type="SUPFAM" id="SSF47781">
    <property type="entry name" value="RuvA domain 2-like"/>
    <property type="match status" value="1"/>
</dbReference>
<dbReference type="PROSITE" id="PS50164">
    <property type="entry name" value="GIY_YIG"/>
    <property type="match status" value="1"/>
</dbReference>
<dbReference type="PROSITE" id="PS50151">
    <property type="entry name" value="UVR"/>
    <property type="match status" value="1"/>
</dbReference>
<dbReference type="PROSITE" id="PS50165">
    <property type="entry name" value="UVRC"/>
    <property type="match status" value="1"/>
</dbReference>
<gene>
    <name evidence="1" type="primary">uvrC</name>
    <name type="ordered locus">BCE33L4267</name>
</gene>
<protein>
    <recommendedName>
        <fullName evidence="1">UvrABC system protein C</fullName>
        <shortName evidence="1">Protein UvrC</shortName>
    </recommendedName>
    <alternativeName>
        <fullName evidence="1">Excinuclease ABC subunit C</fullName>
    </alternativeName>
</protein>
<feature type="chain" id="PRO_0000227396" description="UvrABC system protein C">
    <location>
        <begin position="1"/>
        <end position="594"/>
    </location>
</feature>
<feature type="domain" description="GIY-YIG" evidence="1">
    <location>
        <begin position="14"/>
        <end position="91"/>
    </location>
</feature>
<feature type="domain" description="UVR" evidence="1">
    <location>
        <begin position="196"/>
        <end position="231"/>
    </location>
</feature>
<organism>
    <name type="scientific">Bacillus cereus (strain ZK / E33L)</name>
    <dbReference type="NCBI Taxonomy" id="288681"/>
    <lineage>
        <taxon>Bacteria</taxon>
        <taxon>Bacillati</taxon>
        <taxon>Bacillota</taxon>
        <taxon>Bacilli</taxon>
        <taxon>Bacillales</taxon>
        <taxon>Bacillaceae</taxon>
        <taxon>Bacillus</taxon>
        <taxon>Bacillus cereus group</taxon>
    </lineage>
</organism>